<gene>
    <name evidence="1" type="primary">trpD</name>
    <name type="ordered locus">LMOf2365_1653</name>
</gene>
<dbReference type="EC" id="2.4.2.18" evidence="1"/>
<dbReference type="EMBL" id="AE017262">
    <property type="protein sequence ID" value="AAT04427.1"/>
    <property type="molecule type" value="Genomic_DNA"/>
</dbReference>
<dbReference type="RefSeq" id="WP_003726781.1">
    <property type="nucleotide sequence ID" value="NC_002973.6"/>
</dbReference>
<dbReference type="SMR" id="Q71Z37"/>
<dbReference type="KEGG" id="lmf:LMOf2365_1653"/>
<dbReference type="HOGENOM" id="CLU_034315_2_1_9"/>
<dbReference type="UniPathway" id="UPA00035">
    <property type="reaction ID" value="UER00041"/>
</dbReference>
<dbReference type="GO" id="GO:0005829">
    <property type="term" value="C:cytosol"/>
    <property type="evidence" value="ECO:0007669"/>
    <property type="project" value="TreeGrafter"/>
</dbReference>
<dbReference type="GO" id="GO:0004048">
    <property type="term" value="F:anthranilate phosphoribosyltransferase activity"/>
    <property type="evidence" value="ECO:0007669"/>
    <property type="project" value="UniProtKB-UniRule"/>
</dbReference>
<dbReference type="GO" id="GO:0000287">
    <property type="term" value="F:magnesium ion binding"/>
    <property type="evidence" value="ECO:0007669"/>
    <property type="project" value="UniProtKB-UniRule"/>
</dbReference>
<dbReference type="GO" id="GO:0000162">
    <property type="term" value="P:L-tryptophan biosynthetic process"/>
    <property type="evidence" value="ECO:0007669"/>
    <property type="project" value="UniProtKB-UniRule"/>
</dbReference>
<dbReference type="FunFam" id="1.20.970.10:FF:000014">
    <property type="entry name" value="Anthranilate phosphoribosyltransferase"/>
    <property type="match status" value="1"/>
</dbReference>
<dbReference type="FunFam" id="3.40.1030.10:FF:000002">
    <property type="entry name" value="Anthranilate phosphoribosyltransferase"/>
    <property type="match status" value="1"/>
</dbReference>
<dbReference type="Gene3D" id="3.40.1030.10">
    <property type="entry name" value="Nucleoside phosphorylase/phosphoribosyltransferase catalytic domain"/>
    <property type="match status" value="1"/>
</dbReference>
<dbReference type="Gene3D" id="1.20.970.10">
    <property type="entry name" value="Transferase, Pyrimidine Nucleoside Phosphorylase, Chain C"/>
    <property type="match status" value="1"/>
</dbReference>
<dbReference type="HAMAP" id="MF_00211">
    <property type="entry name" value="TrpD"/>
    <property type="match status" value="1"/>
</dbReference>
<dbReference type="InterPro" id="IPR005940">
    <property type="entry name" value="Anthranilate_Pribosyl_Tfrase"/>
</dbReference>
<dbReference type="InterPro" id="IPR000312">
    <property type="entry name" value="Glycosyl_Trfase_fam3"/>
</dbReference>
<dbReference type="InterPro" id="IPR017459">
    <property type="entry name" value="Glycosyl_Trfase_fam3_N_dom"/>
</dbReference>
<dbReference type="InterPro" id="IPR036320">
    <property type="entry name" value="Glycosyl_Trfase_fam3_N_dom_sf"/>
</dbReference>
<dbReference type="InterPro" id="IPR035902">
    <property type="entry name" value="Nuc_phospho_transferase"/>
</dbReference>
<dbReference type="NCBIfam" id="TIGR01245">
    <property type="entry name" value="trpD"/>
    <property type="match status" value="1"/>
</dbReference>
<dbReference type="PANTHER" id="PTHR43285">
    <property type="entry name" value="ANTHRANILATE PHOSPHORIBOSYLTRANSFERASE"/>
    <property type="match status" value="1"/>
</dbReference>
<dbReference type="PANTHER" id="PTHR43285:SF2">
    <property type="entry name" value="ANTHRANILATE PHOSPHORIBOSYLTRANSFERASE"/>
    <property type="match status" value="1"/>
</dbReference>
<dbReference type="Pfam" id="PF02885">
    <property type="entry name" value="Glycos_trans_3N"/>
    <property type="match status" value="1"/>
</dbReference>
<dbReference type="Pfam" id="PF00591">
    <property type="entry name" value="Glycos_transf_3"/>
    <property type="match status" value="1"/>
</dbReference>
<dbReference type="SUPFAM" id="SSF52418">
    <property type="entry name" value="Nucleoside phosphorylase/phosphoribosyltransferase catalytic domain"/>
    <property type="match status" value="1"/>
</dbReference>
<dbReference type="SUPFAM" id="SSF47648">
    <property type="entry name" value="Nucleoside phosphorylase/phosphoribosyltransferase N-terminal domain"/>
    <property type="match status" value="1"/>
</dbReference>
<keyword id="KW-0028">Amino-acid biosynthesis</keyword>
<keyword id="KW-0057">Aromatic amino acid biosynthesis</keyword>
<keyword id="KW-0328">Glycosyltransferase</keyword>
<keyword id="KW-0460">Magnesium</keyword>
<keyword id="KW-0479">Metal-binding</keyword>
<keyword id="KW-0808">Transferase</keyword>
<keyword id="KW-0822">Tryptophan biosynthesis</keyword>
<accession>Q71Z37</accession>
<feature type="chain" id="PRO_0000154458" description="Anthranilate phosphoribosyltransferase">
    <location>
        <begin position="1"/>
        <end position="339"/>
    </location>
</feature>
<feature type="binding site" evidence="1">
    <location>
        <position position="79"/>
    </location>
    <ligand>
        <name>5-phospho-alpha-D-ribose 1-diphosphate</name>
        <dbReference type="ChEBI" id="CHEBI:58017"/>
    </ligand>
</feature>
<feature type="binding site" evidence="1">
    <location>
        <position position="79"/>
    </location>
    <ligand>
        <name>anthranilate</name>
        <dbReference type="ChEBI" id="CHEBI:16567"/>
        <label>1</label>
    </ligand>
</feature>
<feature type="binding site" evidence="1">
    <location>
        <begin position="82"/>
        <end position="83"/>
    </location>
    <ligand>
        <name>5-phospho-alpha-D-ribose 1-diphosphate</name>
        <dbReference type="ChEBI" id="CHEBI:58017"/>
    </ligand>
</feature>
<feature type="binding site" evidence="1">
    <location>
        <position position="87"/>
    </location>
    <ligand>
        <name>5-phospho-alpha-D-ribose 1-diphosphate</name>
        <dbReference type="ChEBI" id="CHEBI:58017"/>
    </ligand>
</feature>
<feature type="binding site" evidence="1">
    <location>
        <begin position="89"/>
        <end position="92"/>
    </location>
    <ligand>
        <name>5-phospho-alpha-D-ribose 1-diphosphate</name>
        <dbReference type="ChEBI" id="CHEBI:58017"/>
    </ligand>
</feature>
<feature type="binding site" evidence="1">
    <location>
        <position position="91"/>
    </location>
    <ligand>
        <name>Mg(2+)</name>
        <dbReference type="ChEBI" id="CHEBI:18420"/>
        <label>1</label>
    </ligand>
</feature>
<feature type="binding site" evidence="1">
    <location>
        <begin position="107"/>
        <end position="115"/>
    </location>
    <ligand>
        <name>5-phospho-alpha-D-ribose 1-diphosphate</name>
        <dbReference type="ChEBI" id="CHEBI:58017"/>
    </ligand>
</feature>
<feature type="binding site" evidence="1">
    <location>
        <position position="110"/>
    </location>
    <ligand>
        <name>anthranilate</name>
        <dbReference type="ChEBI" id="CHEBI:16567"/>
        <label>1</label>
    </ligand>
</feature>
<feature type="binding site" evidence="1">
    <location>
        <position position="119"/>
    </location>
    <ligand>
        <name>5-phospho-alpha-D-ribose 1-diphosphate</name>
        <dbReference type="ChEBI" id="CHEBI:58017"/>
    </ligand>
</feature>
<feature type="binding site" evidence="1">
    <location>
        <position position="165"/>
    </location>
    <ligand>
        <name>anthranilate</name>
        <dbReference type="ChEBI" id="CHEBI:16567"/>
        <label>2</label>
    </ligand>
</feature>
<feature type="binding site" evidence="1">
    <location>
        <position position="224"/>
    </location>
    <ligand>
        <name>Mg(2+)</name>
        <dbReference type="ChEBI" id="CHEBI:18420"/>
        <label>2</label>
    </ligand>
</feature>
<feature type="binding site" evidence="1">
    <location>
        <position position="225"/>
    </location>
    <ligand>
        <name>Mg(2+)</name>
        <dbReference type="ChEBI" id="CHEBI:18420"/>
        <label>1</label>
    </ligand>
</feature>
<feature type="binding site" evidence="1">
    <location>
        <position position="225"/>
    </location>
    <ligand>
        <name>Mg(2+)</name>
        <dbReference type="ChEBI" id="CHEBI:18420"/>
        <label>2</label>
    </ligand>
</feature>
<organism>
    <name type="scientific">Listeria monocytogenes serotype 4b (strain F2365)</name>
    <dbReference type="NCBI Taxonomy" id="265669"/>
    <lineage>
        <taxon>Bacteria</taxon>
        <taxon>Bacillati</taxon>
        <taxon>Bacillota</taxon>
        <taxon>Bacilli</taxon>
        <taxon>Bacillales</taxon>
        <taxon>Listeriaceae</taxon>
        <taxon>Listeria</taxon>
    </lineage>
</organism>
<reference key="1">
    <citation type="journal article" date="2004" name="Nucleic Acids Res.">
        <title>Whole genome comparisons of serotype 4b and 1/2a strains of the food-borne pathogen Listeria monocytogenes reveal new insights into the core genome components of this species.</title>
        <authorList>
            <person name="Nelson K.E."/>
            <person name="Fouts D.E."/>
            <person name="Mongodin E.F."/>
            <person name="Ravel J."/>
            <person name="DeBoy R.T."/>
            <person name="Kolonay J.F."/>
            <person name="Rasko D.A."/>
            <person name="Angiuoli S.V."/>
            <person name="Gill S.R."/>
            <person name="Paulsen I.T."/>
            <person name="Peterson J.D."/>
            <person name="White O."/>
            <person name="Nelson W.C."/>
            <person name="Nierman W.C."/>
            <person name="Beanan M.J."/>
            <person name="Brinkac L.M."/>
            <person name="Daugherty S.C."/>
            <person name="Dodson R.J."/>
            <person name="Durkin A.S."/>
            <person name="Madupu R."/>
            <person name="Haft D.H."/>
            <person name="Selengut J."/>
            <person name="Van Aken S.E."/>
            <person name="Khouri H.M."/>
            <person name="Fedorova N."/>
            <person name="Forberger H.A."/>
            <person name="Tran B."/>
            <person name="Kathariou S."/>
            <person name="Wonderling L.D."/>
            <person name="Uhlich G.A."/>
            <person name="Bayles D.O."/>
            <person name="Luchansky J.B."/>
            <person name="Fraser C.M."/>
        </authorList>
    </citation>
    <scope>NUCLEOTIDE SEQUENCE [LARGE SCALE GENOMIC DNA]</scope>
    <source>
        <strain>F2365</strain>
    </source>
</reference>
<comment type="function">
    <text evidence="1">Catalyzes the transfer of the phosphoribosyl group of 5-phosphorylribose-1-pyrophosphate (PRPP) to anthranilate to yield N-(5'-phosphoribosyl)-anthranilate (PRA).</text>
</comment>
<comment type="catalytic activity">
    <reaction evidence="1">
        <text>N-(5-phospho-beta-D-ribosyl)anthranilate + diphosphate = 5-phospho-alpha-D-ribose 1-diphosphate + anthranilate</text>
        <dbReference type="Rhea" id="RHEA:11768"/>
        <dbReference type="ChEBI" id="CHEBI:16567"/>
        <dbReference type="ChEBI" id="CHEBI:18277"/>
        <dbReference type="ChEBI" id="CHEBI:33019"/>
        <dbReference type="ChEBI" id="CHEBI:58017"/>
        <dbReference type="EC" id="2.4.2.18"/>
    </reaction>
</comment>
<comment type="cofactor">
    <cofactor evidence="1">
        <name>Mg(2+)</name>
        <dbReference type="ChEBI" id="CHEBI:18420"/>
    </cofactor>
    <text evidence="1">Binds 2 magnesium ions per monomer.</text>
</comment>
<comment type="pathway">
    <text evidence="1">Amino-acid biosynthesis; L-tryptophan biosynthesis; L-tryptophan from chorismate: step 2/5.</text>
</comment>
<comment type="subunit">
    <text evidence="1">Homodimer.</text>
</comment>
<comment type="similarity">
    <text evidence="1">Belongs to the anthranilate phosphoribosyltransferase family.</text>
</comment>
<sequence length="339" mass="36698">MEILLQKVYDQENLSKEEMTMIATEIFEGRLSKTKIAAFLMALKVKGETAEEMAGIAQAMQRVAIQVAFPAGTAMDNCGTGGDKSNSFNISTTSAFVLAAAGIPVAKHGNRSISSRSGSADVCQELGIDINMRPEDMTYLLEKVGIAFLFAPHVHPNMKYVMDVRKELGTPTIFNLIGPLTNPVHLETQLMGIYRRDLLEQTAEVLGQLGRKRAVVLNGAGFMDEASLAGENHYALYENGEVHLYTLRPEDVGLTSYPLEAITGGEAKENAAILRSVLDGEPGAYLDTVLLNAGFGLFANGKVTTVQEGVDLARDLIRSGLAKQKLADLITYQKEVLAK</sequence>
<protein>
    <recommendedName>
        <fullName evidence="1">Anthranilate phosphoribosyltransferase</fullName>
        <ecNumber evidence="1">2.4.2.18</ecNumber>
    </recommendedName>
</protein>
<name>TRPD_LISMF</name>
<proteinExistence type="inferred from homology"/>
<evidence type="ECO:0000255" key="1">
    <source>
        <dbReference type="HAMAP-Rule" id="MF_00211"/>
    </source>
</evidence>